<accession>Q488A2</accession>
<name>RS17_COLP3</name>
<organism>
    <name type="scientific">Colwellia psychrerythraea (strain 34H / ATCC BAA-681)</name>
    <name type="common">Vibrio psychroerythus</name>
    <dbReference type="NCBI Taxonomy" id="167879"/>
    <lineage>
        <taxon>Bacteria</taxon>
        <taxon>Pseudomonadati</taxon>
        <taxon>Pseudomonadota</taxon>
        <taxon>Gammaproteobacteria</taxon>
        <taxon>Alteromonadales</taxon>
        <taxon>Colwelliaceae</taxon>
        <taxon>Colwellia</taxon>
    </lineage>
</organism>
<dbReference type="EMBL" id="CP000083">
    <property type="protein sequence ID" value="AAZ28188.1"/>
    <property type="molecule type" value="Genomic_DNA"/>
</dbReference>
<dbReference type="RefSeq" id="WP_011041713.1">
    <property type="nucleotide sequence ID" value="NC_003910.7"/>
</dbReference>
<dbReference type="SMR" id="Q488A2"/>
<dbReference type="STRING" id="167879.CPS_0864"/>
<dbReference type="KEGG" id="cps:CPS_0864"/>
<dbReference type="eggNOG" id="COG0186">
    <property type="taxonomic scope" value="Bacteria"/>
</dbReference>
<dbReference type="HOGENOM" id="CLU_073626_1_1_6"/>
<dbReference type="Proteomes" id="UP000000547">
    <property type="component" value="Chromosome"/>
</dbReference>
<dbReference type="GO" id="GO:0022627">
    <property type="term" value="C:cytosolic small ribosomal subunit"/>
    <property type="evidence" value="ECO:0007669"/>
    <property type="project" value="TreeGrafter"/>
</dbReference>
<dbReference type="GO" id="GO:0019843">
    <property type="term" value="F:rRNA binding"/>
    <property type="evidence" value="ECO:0007669"/>
    <property type="project" value="UniProtKB-UniRule"/>
</dbReference>
<dbReference type="GO" id="GO:0003735">
    <property type="term" value="F:structural constituent of ribosome"/>
    <property type="evidence" value="ECO:0007669"/>
    <property type="project" value="InterPro"/>
</dbReference>
<dbReference type="GO" id="GO:0006412">
    <property type="term" value="P:translation"/>
    <property type="evidence" value="ECO:0007669"/>
    <property type="project" value="UniProtKB-UniRule"/>
</dbReference>
<dbReference type="CDD" id="cd00364">
    <property type="entry name" value="Ribosomal_uS17"/>
    <property type="match status" value="1"/>
</dbReference>
<dbReference type="Gene3D" id="2.40.50.140">
    <property type="entry name" value="Nucleic acid-binding proteins"/>
    <property type="match status" value="1"/>
</dbReference>
<dbReference type="HAMAP" id="MF_01345_B">
    <property type="entry name" value="Ribosomal_uS17_B"/>
    <property type="match status" value="1"/>
</dbReference>
<dbReference type="InterPro" id="IPR012340">
    <property type="entry name" value="NA-bd_OB-fold"/>
</dbReference>
<dbReference type="InterPro" id="IPR000266">
    <property type="entry name" value="Ribosomal_uS17"/>
</dbReference>
<dbReference type="InterPro" id="IPR019984">
    <property type="entry name" value="Ribosomal_uS17_bact/chlr"/>
</dbReference>
<dbReference type="NCBIfam" id="NF004123">
    <property type="entry name" value="PRK05610.1"/>
    <property type="match status" value="1"/>
</dbReference>
<dbReference type="NCBIfam" id="TIGR03635">
    <property type="entry name" value="uS17_bact"/>
    <property type="match status" value="1"/>
</dbReference>
<dbReference type="PANTHER" id="PTHR10744">
    <property type="entry name" value="40S RIBOSOMAL PROTEIN S11 FAMILY MEMBER"/>
    <property type="match status" value="1"/>
</dbReference>
<dbReference type="PANTHER" id="PTHR10744:SF1">
    <property type="entry name" value="SMALL RIBOSOMAL SUBUNIT PROTEIN US17M"/>
    <property type="match status" value="1"/>
</dbReference>
<dbReference type="Pfam" id="PF00366">
    <property type="entry name" value="Ribosomal_S17"/>
    <property type="match status" value="1"/>
</dbReference>
<dbReference type="PRINTS" id="PR00973">
    <property type="entry name" value="RIBOSOMALS17"/>
</dbReference>
<dbReference type="SUPFAM" id="SSF50249">
    <property type="entry name" value="Nucleic acid-binding proteins"/>
    <property type="match status" value="1"/>
</dbReference>
<feature type="chain" id="PRO_0000233462" description="Small ribosomal subunit protein uS17">
    <location>
        <begin position="1"/>
        <end position="83"/>
    </location>
</feature>
<keyword id="KW-0687">Ribonucleoprotein</keyword>
<keyword id="KW-0689">Ribosomal protein</keyword>
<keyword id="KW-0694">RNA-binding</keyword>
<keyword id="KW-0699">rRNA-binding</keyword>
<protein>
    <recommendedName>
        <fullName evidence="1">Small ribosomal subunit protein uS17</fullName>
    </recommendedName>
    <alternativeName>
        <fullName evidence="2">30S ribosomal protein S17</fullName>
    </alternativeName>
</protein>
<reference key="1">
    <citation type="journal article" date="2005" name="Proc. Natl. Acad. Sci. U.S.A.">
        <title>The psychrophilic lifestyle as revealed by the genome sequence of Colwellia psychrerythraea 34H through genomic and proteomic analyses.</title>
        <authorList>
            <person name="Methe B.A."/>
            <person name="Nelson K.E."/>
            <person name="Deming J.W."/>
            <person name="Momen B."/>
            <person name="Melamud E."/>
            <person name="Zhang X."/>
            <person name="Moult J."/>
            <person name="Madupu R."/>
            <person name="Nelson W.C."/>
            <person name="Dodson R.J."/>
            <person name="Brinkac L.M."/>
            <person name="Daugherty S.C."/>
            <person name="Durkin A.S."/>
            <person name="DeBoy R.T."/>
            <person name="Kolonay J.F."/>
            <person name="Sullivan S.A."/>
            <person name="Zhou L."/>
            <person name="Davidsen T.M."/>
            <person name="Wu M."/>
            <person name="Huston A.L."/>
            <person name="Lewis M."/>
            <person name="Weaver B."/>
            <person name="Weidman J.F."/>
            <person name="Khouri H."/>
            <person name="Utterback T.R."/>
            <person name="Feldblyum T.V."/>
            <person name="Fraser C.M."/>
        </authorList>
    </citation>
    <scope>NUCLEOTIDE SEQUENCE [LARGE SCALE GENOMIC DNA]</scope>
    <source>
        <strain>34H / ATCC BAA-681</strain>
    </source>
</reference>
<proteinExistence type="inferred from homology"/>
<gene>
    <name evidence="1" type="primary">rpsQ</name>
    <name type="ordered locus">CPS_0864</name>
</gene>
<comment type="function">
    <text evidence="1">One of the primary rRNA binding proteins, it binds specifically to the 5'-end of 16S ribosomal RNA.</text>
</comment>
<comment type="subunit">
    <text evidence="1">Part of the 30S ribosomal subunit.</text>
</comment>
<comment type="similarity">
    <text evidence="1">Belongs to the universal ribosomal protein uS17 family.</text>
</comment>
<evidence type="ECO:0000255" key="1">
    <source>
        <dbReference type="HAMAP-Rule" id="MF_01345"/>
    </source>
</evidence>
<evidence type="ECO:0000305" key="2"/>
<sequence>MSETKIRTLQGVVVSNKMDKSIVVLIERRVKHPMYGKYMTRSTKLKAHDETNVCNEGDLVTITEVAPISKSKNWKLVDVITKA</sequence>